<protein>
    <recommendedName>
        <fullName evidence="1">tRNA/tmRNA (uracil-C(5))-methyltransferase</fullName>
        <ecNumber evidence="1">2.1.1.-</ecNumber>
        <ecNumber evidence="1">2.1.1.35</ecNumber>
    </recommendedName>
    <alternativeName>
        <fullName evidence="1">tRNA (uracil(54)-C(5))-methyltransferase</fullName>
    </alternativeName>
    <alternativeName>
        <fullName evidence="1">tRNA(m5U54)-methyltransferase</fullName>
        <shortName evidence="1">RUMT</shortName>
    </alternativeName>
    <alternativeName>
        <fullName evidence="1">tmRNA (uracil(341)-C(5))-methyltransferase</fullName>
    </alternativeName>
</protein>
<comment type="function">
    <text evidence="1">Dual-specificity methyltransferase that catalyzes the formation of 5-methyluridine at position 54 (m5U54) in all tRNAs, and that of position 341 (m5U341) in tmRNA (transfer-mRNA).</text>
</comment>
<comment type="catalytic activity">
    <reaction evidence="1">
        <text>uridine(54) in tRNA + S-adenosyl-L-methionine = 5-methyluridine(54) in tRNA + S-adenosyl-L-homocysteine + H(+)</text>
        <dbReference type="Rhea" id="RHEA:42712"/>
        <dbReference type="Rhea" id="RHEA-COMP:10167"/>
        <dbReference type="Rhea" id="RHEA-COMP:10193"/>
        <dbReference type="ChEBI" id="CHEBI:15378"/>
        <dbReference type="ChEBI" id="CHEBI:57856"/>
        <dbReference type="ChEBI" id="CHEBI:59789"/>
        <dbReference type="ChEBI" id="CHEBI:65315"/>
        <dbReference type="ChEBI" id="CHEBI:74447"/>
        <dbReference type="EC" id="2.1.1.35"/>
    </reaction>
</comment>
<comment type="catalytic activity">
    <reaction evidence="1">
        <text>uridine(341) in tmRNA + S-adenosyl-L-methionine = 5-methyluridine(341) in tmRNA + S-adenosyl-L-homocysteine + H(+)</text>
        <dbReference type="Rhea" id="RHEA:43612"/>
        <dbReference type="Rhea" id="RHEA-COMP:10630"/>
        <dbReference type="Rhea" id="RHEA-COMP:10631"/>
        <dbReference type="ChEBI" id="CHEBI:15378"/>
        <dbReference type="ChEBI" id="CHEBI:57856"/>
        <dbReference type="ChEBI" id="CHEBI:59789"/>
        <dbReference type="ChEBI" id="CHEBI:65315"/>
        <dbReference type="ChEBI" id="CHEBI:74447"/>
    </reaction>
</comment>
<comment type="similarity">
    <text evidence="1">Belongs to the class I-like SAM-binding methyltransferase superfamily. RNA M5U methyltransferase family. TrmA subfamily.</text>
</comment>
<sequence length="366" mass="42133">MNLAAMDPTTYDAQLEAKRIKLEQAFAQFETPSIEVFASDPEHYRMRAEFRVWHEGDDLYYYMFDKALNDKVRCDQYLPASTLINEMMAALIAELKPNPSLRHKLFQVDFLSTLSGEILVSLLYHRQLDDQWRAEAIALKAKLSSQFKVNIIGRARKQKIDLDKDFVVESLQVNDKVFHYKQIENSFTQPNAKVAIKMLEWAIDVTQNSQGDLLELYCGNGNFSIALAQNFNRVLATELAKPSVDAAQYNIEINGIDNLQIIRMSAEEFSDAMAKKRSFRRLEGIDLDSYLCNTIFVDPPRAGIDPATLDLVQGYERILYISCNPDTLKDNLQQLYKTHKVTRFALFDQFPYTDHMETGVLLERIK</sequence>
<reference key="1">
    <citation type="journal article" date="2002" name="Nat. Biotechnol.">
        <title>Genome sequence of the dissimilatory metal ion-reducing bacterium Shewanella oneidensis.</title>
        <authorList>
            <person name="Heidelberg J.F."/>
            <person name="Paulsen I.T."/>
            <person name="Nelson K.E."/>
            <person name="Gaidos E.J."/>
            <person name="Nelson W.C."/>
            <person name="Read T.D."/>
            <person name="Eisen J.A."/>
            <person name="Seshadri R."/>
            <person name="Ward N.L."/>
            <person name="Methe B.A."/>
            <person name="Clayton R.A."/>
            <person name="Meyer T."/>
            <person name="Tsapin A."/>
            <person name="Scott J."/>
            <person name="Beanan M.J."/>
            <person name="Brinkac L.M."/>
            <person name="Daugherty S.C."/>
            <person name="DeBoy R.T."/>
            <person name="Dodson R.J."/>
            <person name="Durkin A.S."/>
            <person name="Haft D.H."/>
            <person name="Kolonay J.F."/>
            <person name="Madupu R."/>
            <person name="Peterson J.D."/>
            <person name="Umayam L.A."/>
            <person name="White O."/>
            <person name="Wolf A.M."/>
            <person name="Vamathevan J.J."/>
            <person name="Weidman J.F."/>
            <person name="Impraim M."/>
            <person name="Lee K."/>
            <person name="Berry K.J."/>
            <person name="Lee C."/>
            <person name="Mueller J."/>
            <person name="Khouri H.M."/>
            <person name="Gill J."/>
            <person name="Utterback T.R."/>
            <person name="McDonald L.A."/>
            <person name="Feldblyum T.V."/>
            <person name="Smith H.O."/>
            <person name="Venter J.C."/>
            <person name="Nealson K.H."/>
            <person name="Fraser C.M."/>
        </authorList>
    </citation>
    <scope>NUCLEOTIDE SEQUENCE [LARGE SCALE GENOMIC DNA]</scope>
    <source>
        <strain>ATCC 700550 / JCM 31522 / CIP 106686 / LMG 19005 / NCIMB 14063 / MR-1</strain>
    </source>
</reference>
<name>TRMA_SHEON</name>
<proteinExistence type="inferred from homology"/>
<accession>Q8CX51</accession>
<evidence type="ECO:0000255" key="1">
    <source>
        <dbReference type="HAMAP-Rule" id="MF_01011"/>
    </source>
</evidence>
<organism>
    <name type="scientific">Shewanella oneidensis (strain ATCC 700550 / JCM 31522 / CIP 106686 / LMG 19005 / NCIMB 14063 / MR-1)</name>
    <dbReference type="NCBI Taxonomy" id="211586"/>
    <lineage>
        <taxon>Bacteria</taxon>
        <taxon>Pseudomonadati</taxon>
        <taxon>Pseudomonadota</taxon>
        <taxon>Gammaproteobacteria</taxon>
        <taxon>Alteromonadales</taxon>
        <taxon>Shewanellaceae</taxon>
        <taxon>Shewanella</taxon>
    </lineage>
</organism>
<gene>
    <name evidence="1" type="primary">trmA</name>
    <name type="ordered locus">SO_0206</name>
</gene>
<dbReference type="EC" id="2.1.1.-" evidence="1"/>
<dbReference type="EC" id="2.1.1.35" evidence="1"/>
<dbReference type="EMBL" id="AE014299">
    <property type="protein sequence ID" value="AAN53292.1"/>
    <property type="molecule type" value="Genomic_DNA"/>
</dbReference>
<dbReference type="RefSeq" id="NP_715847.1">
    <property type="nucleotide sequence ID" value="NC_004347.2"/>
</dbReference>
<dbReference type="RefSeq" id="WP_011070598.1">
    <property type="nucleotide sequence ID" value="NC_004347.2"/>
</dbReference>
<dbReference type="SMR" id="Q8CX51"/>
<dbReference type="STRING" id="211586.SO_0206"/>
<dbReference type="PaxDb" id="211586-SO_0206"/>
<dbReference type="KEGG" id="son:SO_0206"/>
<dbReference type="PATRIC" id="fig|211586.12.peg.194"/>
<dbReference type="eggNOG" id="COG2265">
    <property type="taxonomic scope" value="Bacteria"/>
</dbReference>
<dbReference type="HOGENOM" id="CLU_043022_0_0_6"/>
<dbReference type="OrthoDB" id="9804590at2"/>
<dbReference type="PhylomeDB" id="Q8CX51"/>
<dbReference type="BioCyc" id="SONE211586:G1GMP-190-MONOMER"/>
<dbReference type="Proteomes" id="UP000008186">
    <property type="component" value="Chromosome"/>
</dbReference>
<dbReference type="GO" id="GO:0005829">
    <property type="term" value="C:cytosol"/>
    <property type="evidence" value="ECO:0000318"/>
    <property type="project" value="GO_Central"/>
</dbReference>
<dbReference type="GO" id="GO:0019843">
    <property type="term" value="F:rRNA binding"/>
    <property type="evidence" value="ECO:0000318"/>
    <property type="project" value="GO_Central"/>
</dbReference>
<dbReference type="GO" id="GO:0030697">
    <property type="term" value="F:tRNA (uracil(54)-C5)-methyltransferase activity, S-adenosyl methionine-dependent"/>
    <property type="evidence" value="ECO:0000318"/>
    <property type="project" value="GO_Central"/>
</dbReference>
<dbReference type="GO" id="GO:0000049">
    <property type="term" value="F:tRNA binding"/>
    <property type="evidence" value="ECO:0000318"/>
    <property type="project" value="GO_Central"/>
</dbReference>
<dbReference type="GO" id="GO:0030488">
    <property type="term" value="P:tRNA methylation"/>
    <property type="evidence" value="ECO:0007669"/>
    <property type="project" value="UniProtKB-UniRule"/>
</dbReference>
<dbReference type="CDD" id="cd02440">
    <property type="entry name" value="AdoMet_MTases"/>
    <property type="match status" value="1"/>
</dbReference>
<dbReference type="FunFam" id="2.40.50.1070:FF:000001">
    <property type="entry name" value="tRNA/tmRNA (uracil-C(5))-methyltransferase"/>
    <property type="match status" value="1"/>
</dbReference>
<dbReference type="FunFam" id="3.40.50.150:FF:000012">
    <property type="entry name" value="tRNA/tmRNA (uracil-C(5))-methyltransferase"/>
    <property type="match status" value="1"/>
</dbReference>
<dbReference type="Gene3D" id="2.40.50.1070">
    <property type="match status" value="1"/>
</dbReference>
<dbReference type="Gene3D" id="3.40.50.150">
    <property type="entry name" value="Vaccinia Virus protein VP39"/>
    <property type="match status" value="1"/>
</dbReference>
<dbReference type="HAMAP" id="MF_01011">
    <property type="entry name" value="RNA_methyltr_TrmA"/>
    <property type="match status" value="1"/>
</dbReference>
<dbReference type="InterPro" id="IPR030390">
    <property type="entry name" value="MeTrfase_TrmA_AS"/>
</dbReference>
<dbReference type="InterPro" id="IPR030391">
    <property type="entry name" value="MeTrfase_TrmA_CS"/>
</dbReference>
<dbReference type="InterPro" id="IPR029063">
    <property type="entry name" value="SAM-dependent_MTases_sf"/>
</dbReference>
<dbReference type="InterPro" id="IPR011869">
    <property type="entry name" value="TrmA_MeTrfase"/>
</dbReference>
<dbReference type="InterPro" id="IPR010280">
    <property type="entry name" value="U5_MeTrfase_fam"/>
</dbReference>
<dbReference type="NCBIfam" id="TIGR02143">
    <property type="entry name" value="trmA_only"/>
    <property type="match status" value="1"/>
</dbReference>
<dbReference type="PANTHER" id="PTHR47790">
    <property type="entry name" value="TRNA/TMRNA (URACIL-C(5))-METHYLTRANSFERASE"/>
    <property type="match status" value="1"/>
</dbReference>
<dbReference type="PANTHER" id="PTHR47790:SF2">
    <property type="entry name" value="TRNA_TMRNA (URACIL-C(5))-METHYLTRANSFERASE"/>
    <property type="match status" value="1"/>
</dbReference>
<dbReference type="Pfam" id="PF05958">
    <property type="entry name" value="tRNA_U5-meth_tr"/>
    <property type="match status" value="1"/>
</dbReference>
<dbReference type="SUPFAM" id="SSF53335">
    <property type="entry name" value="S-adenosyl-L-methionine-dependent methyltransferases"/>
    <property type="match status" value="1"/>
</dbReference>
<dbReference type="PROSITE" id="PS51687">
    <property type="entry name" value="SAM_MT_RNA_M5U"/>
    <property type="match status" value="1"/>
</dbReference>
<dbReference type="PROSITE" id="PS01230">
    <property type="entry name" value="TRMA_1"/>
    <property type="match status" value="1"/>
</dbReference>
<dbReference type="PROSITE" id="PS01231">
    <property type="entry name" value="TRMA_2"/>
    <property type="match status" value="1"/>
</dbReference>
<feature type="chain" id="PRO_0000161878" description="tRNA/tmRNA (uracil-C(5))-methyltransferase">
    <location>
        <begin position="1"/>
        <end position="366"/>
    </location>
</feature>
<feature type="active site" description="Nucleophile" evidence="1">
    <location>
        <position position="323"/>
    </location>
</feature>
<feature type="active site" description="Proton acceptor" evidence="1">
    <location>
        <position position="357"/>
    </location>
</feature>
<feature type="binding site" evidence="1">
    <location>
        <position position="189"/>
    </location>
    <ligand>
        <name>S-adenosyl-L-methionine</name>
        <dbReference type="ChEBI" id="CHEBI:59789"/>
    </ligand>
</feature>
<feature type="binding site" evidence="1">
    <location>
        <position position="217"/>
    </location>
    <ligand>
        <name>S-adenosyl-L-methionine</name>
        <dbReference type="ChEBI" id="CHEBI:59789"/>
    </ligand>
</feature>
<feature type="binding site" evidence="1">
    <location>
        <position position="222"/>
    </location>
    <ligand>
        <name>S-adenosyl-L-methionine</name>
        <dbReference type="ChEBI" id="CHEBI:59789"/>
    </ligand>
</feature>
<feature type="binding site" evidence="1">
    <location>
        <position position="238"/>
    </location>
    <ligand>
        <name>S-adenosyl-L-methionine</name>
        <dbReference type="ChEBI" id="CHEBI:59789"/>
    </ligand>
</feature>
<feature type="binding site" evidence="1">
    <location>
        <position position="298"/>
    </location>
    <ligand>
        <name>S-adenosyl-L-methionine</name>
        <dbReference type="ChEBI" id="CHEBI:59789"/>
    </ligand>
</feature>
<keyword id="KW-0489">Methyltransferase</keyword>
<keyword id="KW-1185">Reference proteome</keyword>
<keyword id="KW-0949">S-adenosyl-L-methionine</keyword>
<keyword id="KW-0808">Transferase</keyword>
<keyword id="KW-0819">tRNA processing</keyword>